<comment type="function">
    <text evidence="5 8">Short chain dehydrogenase/reductase; part of the gene cluster that mediates the biosynthesis of the diterpenoid pyrones higginsianins A and B (PubMed:32286350). The first step of the pathway is the synthesis of the alpha-pyrone moiety by the polyketide synthase dpchA via condensation of one acetyl-CoA starter unit with 3 malonyl-CoA units and 2 methylations (Probable). The alpha-pyrone is then combined with geranylgeranyl pyrophosphate (GGPP) formed by the GGPP synthase dpchD through the action of the prenyltransferase dpchC to yield a linear alpha-pyrone diterpenoid (Probable). Subsequent steps in the diterpenoid pyrone biosynthetic pathway involve the decalin core formation, which is initiated by the epoxidation of the C10-C11 olefin by the FAD-dependent oxidoreductase dpchE, and is followed by a cyclization cascade catalyzed by the terpene cyclase dpchB (Probable). The short chain dehydrogenase/reductase dpchG then oxidizes the 8S hydroxy group to a ketone and the short chain dehydrogenase/reductase dpchH reduces the ketone to the 8R hydroxy group to yield higginsianin B (PubMed:32286350). Finally, the FAD-dependent oxidoreductase dpchF converts higginsianin B into higginsianin A (PubMed:32286350).</text>
</comment>
<comment type="pathway">
    <text evidence="5">Secondary metabolite biosynthesis; terpenoid biosynthesis.</text>
</comment>
<comment type="subcellular location">
    <subcellularLocation>
        <location evidence="2">Membrane</location>
        <topology evidence="2">Single-pass membrane protein</topology>
    </subcellularLocation>
</comment>
<comment type="biotechnology">
    <text evidence="5">Diterpenoid pyrones display various biological activities and higginsianin A shows anti-HIV activity.</text>
</comment>
<comment type="sequence caution" evidence="7">
    <conflict type="erroneous gene model prediction">
        <sequence resource="EMBL" id="CACQ02005368"/>
    </conflict>
</comment>
<keyword id="KW-0325">Glycoprotein</keyword>
<keyword id="KW-0472">Membrane</keyword>
<keyword id="KW-0520">NAD</keyword>
<keyword id="KW-0560">Oxidoreductase</keyword>
<keyword id="KW-1185">Reference proteome</keyword>
<keyword id="KW-0812">Transmembrane</keyword>
<keyword id="KW-1133">Transmembrane helix</keyword>
<sequence>MWTGQPASGPPFDHENHSASCTQHFALFSSPSPANSEPKSMLSAWAHRLCVRAVDVLFGTFLYVPLGILFLKKSLSGFGDGDWDSSQIPDLHGKVAVVTGGNAGIGYHTVRQLAAKGAKVYLAARSESRAKEAIKRLREENPDIPQEKLVWLPLDLSSQAQVVDAARDLMSKTERLDILVNNAGVDPYNYVKTADGFEMTMAVNHIGHWTLTYCLLPLLKATAAQQGSDVRVITLSSSGERNHSANNHFTTLKDLDDPCAGPGWEDSRLAQGKRYGTSKLANILFATELQRRMDEEGAGILSLSLNPGTIRTEGAADVMPLVTQPLVWLLFTDAAKGADTTMFAATAREVRENSEQWKGRYLDGPGRIKPPSPKARDAVAARNLWNITAAAVKGTGALEKL</sequence>
<proteinExistence type="evidence at protein level"/>
<organism>
    <name type="scientific">Colletotrichum higginsianum (strain IMI 349063)</name>
    <name type="common">Crucifer anthracnose fungus</name>
    <dbReference type="NCBI Taxonomy" id="759273"/>
    <lineage>
        <taxon>Eukaryota</taxon>
        <taxon>Fungi</taxon>
        <taxon>Dikarya</taxon>
        <taxon>Ascomycota</taxon>
        <taxon>Pezizomycotina</taxon>
        <taxon>Sordariomycetes</taxon>
        <taxon>Hypocreomycetidae</taxon>
        <taxon>Glomerellales</taxon>
        <taxon>Glomerellaceae</taxon>
        <taxon>Colletotrichum</taxon>
        <taxon>Colletotrichum destructivum species complex</taxon>
    </lineage>
</organism>
<evidence type="ECO:0000250" key="1">
    <source>
        <dbReference type="UniProtKB" id="Q92506"/>
    </source>
</evidence>
<evidence type="ECO:0000255" key="2"/>
<evidence type="ECO:0000255" key="3">
    <source>
        <dbReference type="PROSITE-ProRule" id="PRU00498"/>
    </source>
</evidence>
<evidence type="ECO:0000255" key="4">
    <source>
        <dbReference type="PROSITE-ProRule" id="PRU10001"/>
    </source>
</evidence>
<evidence type="ECO:0000269" key="5">
    <source>
    </source>
</evidence>
<evidence type="ECO:0000303" key="6">
    <source>
    </source>
</evidence>
<evidence type="ECO:0000305" key="7"/>
<evidence type="ECO:0000305" key="8">
    <source>
    </source>
</evidence>
<reference key="1">
    <citation type="journal article" date="2012" name="Nat. Genet.">
        <title>Lifestyle transitions in plant pathogenic Colletotrichum fungi deciphered by genome and transcriptome analyses.</title>
        <authorList>
            <person name="O'Connell R.J."/>
            <person name="Thon M.R."/>
            <person name="Hacquard S."/>
            <person name="Amyotte S.G."/>
            <person name="Kleemann J."/>
            <person name="Torres M.F."/>
            <person name="Damm U."/>
            <person name="Buiate E.A."/>
            <person name="Epstein L."/>
            <person name="Alkan N."/>
            <person name="Altmueller J."/>
            <person name="Alvarado-Balderrama L."/>
            <person name="Bauser C.A."/>
            <person name="Becker C."/>
            <person name="Birren B.W."/>
            <person name="Chen Z."/>
            <person name="Choi J."/>
            <person name="Crouch J.A."/>
            <person name="Duvick J.P."/>
            <person name="Farman M.A."/>
            <person name="Gan P."/>
            <person name="Heiman D."/>
            <person name="Henrissat B."/>
            <person name="Howard R.J."/>
            <person name="Kabbage M."/>
            <person name="Koch C."/>
            <person name="Kracher B."/>
            <person name="Kubo Y."/>
            <person name="Law A.D."/>
            <person name="Lebrun M.-H."/>
            <person name="Lee Y.-H."/>
            <person name="Miyara I."/>
            <person name="Moore N."/>
            <person name="Neumann U."/>
            <person name="Nordstroem K."/>
            <person name="Panaccione D.G."/>
            <person name="Panstruga R."/>
            <person name="Place M."/>
            <person name="Proctor R.H."/>
            <person name="Prusky D."/>
            <person name="Rech G."/>
            <person name="Reinhardt R."/>
            <person name="Rollins J.A."/>
            <person name="Rounsley S."/>
            <person name="Schardl C.L."/>
            <person name="Schwartz D.C."/>
            <person name="Shenoy N."/>
            <person name="Shirasu K."/>
            <person name="Sikhakolli U.R."/>
            <person name="Stueber K."/>
            <person name="Sukno S.A."/>
            <person name="Sweigard J.A."/>
            <person name="Takano Y."/>
            <person name="Takahara H."/>
            <person name="Trail F."/>
            <person name="van der Does H.C."/>
            <person name="Voll L.M."/>
            <person name="Will I."/>
            <person name="Young S."/>
            <person name="Zeng Q."/>
            <person name="Zhang J."/>
            <person name="Zhou S."/>
            <person name="Dickman M.B."/>
            <person name="Schulze-Lefert P."/>
            <person name="Ver Loren van Themaat E."/>
            <person name="Ma L.-J."/>
            <person name="Vaillancourt L.J."/>
        </authorList>
    </citation>
    <scope>NUCLEOTIDE SEQUENCE [LARGE SCALE GENOMIC DNA]</scope>
    <source>
        <strain>IMI 349063</strain>
    </source>
</reference>
<reference key="2">
    <citation type="journal article" date="2017" name="BMC Genomics">
        <title>Gapless genome assembly of Colletotrichum higginsianum reveals chromosome structure and association of transposable elements with secondary metabolite gene clusters.</title>
        <authorList>
            <person name="Dallery J.-F."/>
            <person name="Lapalu N."/>
            <person name="Zampounis A."/>
            <person name="Pigne S."/>
            <person name="Luyten I."/>
            <person name="Amselem J."/>
            <person name="Wittenberg A.H.J."/>
            <person name="Zhou S."/>
            <person name="de Queiroz M.V."/>
            <person name="Robin G.P."/>
            <person name="Auger A."/>
            <person name="Hainaut M."/>
            <person name="Henrissat B."/>
            <person name="Kim K.-T."/>
            <person name="Lee Y.-H."/>
            <person name="Lespinet O."/>
            <person name="Schwartz D.C."/>
            <person name="Thon M.R."/>
            <person name="O'Connell R.J."/>
        </authorList>
    </citation>
    <scope>NUCLEOTIDE SEQUENCE [LARGE SCALE GENOMIC DNA]</scope>
    <scope>GENOME REANNOTATION</scope>
    <source>
        <strain>IMI 349063</strain>
    </source>
</reference>
<reference key="3">
    <citation type="journal article" date="2020" name="Nat. Commun.">
        <title>Synthetic biology based construction of biological activity-related library of fungal decalin-containing diterpenoid pyrones.</title>
        <authorList>
            <person name="Tsukada K."/>
            <person name="Shinki S."/>
            <person name="Kaneko A."/>
            <person name="Murakami K."/>
            <person name="Irie K."/>
            <person name="Murai M."/>
            <person name="Miyoshi H."/>
            <person name="Dan S."/>
            <person name="Kawaji K."/>
            <person name="Hayashi H."/>
            <person name="Kodama E.N."/>
            <person name="Hori A."/>
            <person name="Salim E."/>
            <person name="Kuraishi T."/>
            <person name="Hirata N."/>
            <person name="Kanda Y."/>
            <person name="Asai T."/>
        </authorList>
    </citation>
    <scope>FUNCTION</scope>
    <scope>CATALYTIC ACTIVITY</scope>
    <scope>PATHWAY</scope>
    <scope>BIOTECHNOLOGY</scope>
</reference>
<name>DPCHH_COLHI</name>
<gene>
    <name evidence="6" type="primary">dpchH</name>
    <name type="ORF">CH063_02829</name>
    <name type="ORF">CH63R_05479</name>
</gene>
<protein>
    <recommendedName>
        <fullName evidence="6">Short chain dehydrogenase/reductase dpchH</fullName>
        <ecNumber evidence="5">1.1.1.-</ecNumber>
    </recommendedName>
    <alternativeName>
        <fullName evidence="6">Diterpenoid pyrone biosynthesis cluster protein H</fullName>
    </alternativeName>
</protein>
<accession>A0A1B7YCL6</accession>
<accession>H1VQB2</accession>
<dbReference type="EC" id="1.1.1.-" evidence="5"/>
<dbReference type="EMBL" id="CM004458">
    <property type="protein sequence ID" value="OBR09787.1"/>
    <property type="molecule type" value="Genomic_DNA"/>
</dbReference>
<dbReference type="EMBL" id="CACQ02005368">
    <property type="status" value="NOT_ANNOTATED_CDS"/>
    <property type="molecule type" value="Genomic_DNA"/>
</dbReference>
<dbReference type="RefSeq" id="XP_018158304.1">
    <property type="nucleotide sequence ID" value="XM_018300454.1"/>
</dbReference>
<dbReference type="SMR" id="A0A1B7YCL6"/>
<dbReference type="STRING" id="759273.H1VQB2"/>
<dbReference type="GlyCosmos" id="A0A1B7YCL6">
    <property type="glycosylation" value="3 sites, No reported glycans"/>
</dbReference>
<dbReference type="EnsemblFungi" id="CCF42418">
    <property type="protein sequence ID" value="CCF42418"/>
    <property type="gene ID" value="CH063_02829"/>
</dbReference>
<dbReference type="GeneID" id="28864561"/>
<dbReference type="KEGG" id="chig:CH63R_05479"/>
<dbReference type="VEuPathDB" id="FungiDB:CH63R_05479"/>
<dbReference type="eggNOG" id="KOG1208">
    <property type="taxonomic scope" value="Eukaryota"/>
</dbReference>
<dbReference type="HOGENOM" id="CLU_010194_44_6_1"/>
<dbReference type="OrthoDB" id="34315at1028384"/>
<dbReference type="UniPathway" id="UPA00213"/>
<dbReference type="Proteomes" id="UP000007174">
    <property type="component" value="Unassembled WGS sequence"/>
</dbReference>
<dbReference type="Proteomes" id="UP000092177">
    <property type="component" value="Chromosome 4"/>
</dbReference>
<dbReference type="GO" id="GO:0016020">
    <property type="term" value="C:membrane"/>
    <property type="evidence" value="ECO:0007669"/>
    <property type="project" value="UniProtKB-SubCell"/>
</dbReference>
<dbReference type="GO" id="GO:0016491">
    <property type="term" value="F:oxidoreductase activity"/>
    <property type="evidence" value="ECO:0007669"/>
    <property type="project" value="UniProtKB-KW"/>
</dbReference>
<dbReference type="GO" id="GO:0016114">
    <property type="term" value="P:terpenoid biosynthetic process"/>
    <property type="evidence" value="ECO:0007669"/>
    <property type="project" value="UniProtKB-UniPathway"/>
</dbReference>
<dbReference type="Gene3D" id="3.40.50.720">
    <property type="entry name" value="NAD(P)-binding Rossmann-like Domain"/>
    <property type="match status" value="1"/>
</dbReference>
<dbReference type="InterPro" id="IPR036291">
    <property type="entry name" value="NAD(P)-bd_dom_sf"/>
</dbReference>
<dbReference type="InterPro" id="IPR002347">
    <property type="entry name" value="SDR_fam"/>
</dbReference>
<dbReference type="PANTHER" id="PTHR43157:SF31">
    <property type="entry name" value="PHOSPHATIDYLINOSITOL-GLYCAN BIOSYNTHESIS CLASS F PROTEIN"/>
    <property type="match status" value="1"/>
</dbReference>
<dbReference type="PANTHER" id="PTHR43157">
    <property type="entry name" value="PHOSPHATIDYLINOSITOL-GLYCAN BIOSYNTHESIS CLASS F PROTEIN-RELATED"/>
    <property type="match status" value="1"/>
</dbReference>
<dbReference type="Pfam" id="PF00106">
    <property type="entry name" value="adh_short"/>
    <property type="match status" value="1"/>
</dbReference>
<dbReference type="PRINTS" id="PR00081">
    <property type="entry name" value="GDHRDH"/>
</dbReference>
<dbReference type="SUPFAM" id="SSF51735">
    <property type="entry name" value="NAD(P)-binding Rossmann-fold domains"/>
    <property type="match status" value="1"/>
</dbReference>
<feature type="chain" id="PRO_0000451553" description="Short chain dehydrogenase/reductase dpchH">
    <location>
        <begin position="1"/>
        <end position="401"/>
    </location>
</feature>
<feature type="transmembrane region" description="Helical" evidence="2">
    <location>
        <begin position="51"/>
        <end position="71"/>
    </location>
</feature>
<feature type="active site" description="Proton acceptor" evidence="4">
    <location>
        <position position="275"/>
    </location>
</feature>
<feature type="binding site" evidence="1">
    <location>
        <begin position="72"/>
        <end position="80"/>
    </location>
    <ligand>
        <name>NAD(+)</name>
        <dbReference type="ChEBI" id="CHEBI:57540"/>
    </ligand>
</feature>
<feature type="binding site" evidence="1">
    <location>
        <begin position="99"/>
        <end position="100"/>
    </location>
    <ligand>
        <name>NAD(+)</name>
        <dbReference type="ChEBI" id="CHEBI:57540"/>
    </ligand>
</feature>
<feature type="binding site" evidence="1">
    <location>
        <begin position="118"/>
        <end position="120"/>
    </location>
    <ligand>
        <name>NAD(+)</name>
        <dbReference type="ChEBI" id="CHEBI:57540"/>
    </ligand>
</feature>
<feature type="binding site" evidence="1">
    <location>
        <begin position="275"/>
        <end position="279"/>
    </location>
    <ligand>
        <name>NAD(+)</name>
        <dbReference type="ChEBI" id="CHEBI:57540"/>
    </ligand>
</feature>
<feature type="binding site" evidence="1">
    <location>
        <begin position="308"/>
        <end position="310"/>
    </location>
    <ligand>
        <name>NAD(+)</name>
        <dbReference type="ChEBI" id="CHEBI:57540"/>
    </ligand>
</feature>
<feature type="glycosylation site" description="N-linked (GlcNAc...) asparagine" evidence="3">
    <location>
        <position position="16"/>
    </location>
</feature>
<feature type="glycosylation site" description="N-linked (GlcNAc...) asparagine" evidence="3">
    <location>
        <position position="242"/>
    </location>
</feature>
<feature type="glycosylation site" description="N-linked (GlcNAc...) asparagine" evidence="3">
    <location>
        <position position="386"/>
    </location>
</feature>